<comment type="function">
    <text evidence="5 6 7">Dopamine transporter (PubMed:29346382, PubMed:9765501). Terminates the action of dopamine by its high affinity sodium-dependent reuptake into presynaptic terminals. Plays a role in the learned avoidance behavior of animals exposed to food that induces mitochondrial stress (PubMed:35074444).</text>
</comment>
<comment type="subcellular location">
    <subcellularLocation>
        <location evidence="7">Cell membrane</location>
        <topology evidence="1">Multi-pass membrane protein</topology>
    </subcellularLocation>
</comment>
<comment type="disruption phenotype">
    <text evidence="6">Significantly reduces the learned avoidance of bacteria that induce mitochondrial stress.</text>
</comment>
<comment type="miscellaneous">
    <text evidence="4">This protein is the target of psychomotor stimulants such as amphetamines or cocaine. Plays a role in promoting amphetamine-induced loss of motility in water, termed swimming-induced paralysis (PubMed:20410438).</text>
</comment>
<comment type="similarity">
    <text evidence="8">Belongs to the sodium:neurotransmitter symporter (SNF) (TC 2.A.22) family.</text>
</comment>
<evidence type="ECO:0000250" key="1">
    <source>
        <dbReference type="UniProtKB" id="Q7K4Y6"/>
    </source>
</evidence>
<evidence type="ECO:0000255" key="2"/>
<evidence type="ECO:0000256" key="3">
    <source>
        <dbReference type="SAM" id="MobiDB-lite"/>
    </source>
</evidence>
<evidence type="ECO:0000269" key="4">
    <source>
    </source>
</evidence>
<evidence type="ECO:0000269" key="5">
    <source>
    </source>
</evidence>
<evidence type="ECO:0000269" key="6">
    <source>
    </source>
</evidence>
<evidence type="ECO:0000269" key="7">
    <source>
    </source>
</evidence>
<evidence type="ECO:0000305" key="8"/>
<evidence type="ECO:0000312" key="9">
    <source>
        <dbReference type="WormBase" id="T23G5.5"/>
    </source>
</evidence>
<protein>
    <recommendedName>
        <fullName>Sodium-dependent dopamine transporter</fullName>
        <shortName>DA transporter</shortName>
        <shortName>DAT</shortName>
    </recommendedName>
</protein>
<feature type="chain" id="PRO_0000214815" description="Sodium-dependent dopamine transporter">
    <location>
        <begin position="1"/>
        <end position="615"/>
    </location>
</feature>
<feature type="topological domain" description="Cytoplasmic" evidence="1">
    <location>
        <begin position="1"/>
        <end position="46"/>
    </location>
</feature>
<feature type="transmembrane region" description="Helical; Name=1" evidence="1">
    <location>
        <begin position="47"/>
        <end position="72"/>
    </location>
</feature>
<feature type="topological domain" description="Extracellular" evidence="1">
    <location>
        <begin position="73"/>
        <end position="76"/>
    </location>
</feature>
<feature type="transmembrane region" description="Helical; Name=2" evidence="1">
    <location>
        <begin position="77"/>
        <end position="100"/>
    </location>
</feature>
<feature type="topological domain" description="Cytoplasmic" evidence="1">
    <location>
        <begin position="101"/>
        <end position="120"/>
    </location>
</feature>
<feature type="transmembrane region" description="Helical; Name=3" evidence="1">
    <location>
        <begin position="121"/>
        <end position="151"/>
    </location>
</feature>
<feature type="topological domain" description="Extracellular" evidence="1">
    <location>
        <begin position="152"/>
        <end position="229"/>
    </location>
</feature>
<feature type="transmembrane region" description="Helical; Name=4" evidence="1">
    <location>
        <begin position="230"/>
        <end position="250"/>
    </location>
</feature>
<feature type="topological domain" description="Cytoplasmic" evidence="1">
    <location>
        <begin position="251"/>
        <end position="253"/>
    </location>
</feature>
<feature type="transmembrane region" description="Helical; Name=5" evidence="1">
    <location>
        <begin position="254"/>
        <end position="278"/>
    </location>
</feature>
<feature type="topological domain" description="Extracellular" evidence="1">
    <location>
        <begin position="279"/>
        <end position="302"/>
    </location>
</feature>
<feature type="transmembrane region" description="Helical; Name=6" evidence="1">
    <location>
        <begin position="303"/>
        <end position="328"/>
    </location>
</feature>
<feature type="topological domain" description="Cytoplasmic" evidence="1">
    <location>
        <begin position="329"/>
        <end position="334"/>
    </location>
</feature>
<feature type="transmembrane region" description="Helical; Name=7" evidence="1">
    <location>
        <begin position="335"/>
        <end position="358"/>
    </location>
</feature>
<feature type="topological domain" description="Extracellular" evidence="1">
    <location>
        <begin position="359"/>
        <end position="398"/>
    </location>
</feature>
<feature type="transmembrane region" description="Helical; Name=8" evidence="1">
    <location>
        <begin position="399"/>
        <end position="424"/>
    </location>
</feature>
<feature type="topological domain" description="Cytoplasmic" evidence="1">
    <location>
        <begin position="425"/>
        <end position="439"/>
    </location>
</feature>
<feature type="transmembrane region" description="Helical; Name=9" evidence="1">
    <location>
        <begin position="440"/>
        <end position="460"/>
    </location>
</feature>
<feature type="topological domain" description="Extracellular" evidence="1">
    <location>
        <position position="461"/>
    </location>
</feature>
<feature type="transmembrane region" description="Helical; Name=10" evidence="1">
    <location>
        <begin position="462"/>
        <end position="488"/>
    </location>
</feature>
<feature type="topological domain" description="Cytoplasmic" evidence="1">
    <location>
        <begin position="489"/>
        <end position="518"/>
    </location>
</feature>
<feature type="transmembrane region" description="Helical; Name=11" evidence="1">
    <location>
        <begin position="519"/>
        <end position="541"/>
    </location>
</feature>
<feature type="topological domain" description="Extracellular" evidence="1">
    <location>
        <begin position="542"/>
        <end position="544"/>
    </location>
</feature>
<feature type="transmembrane region" description="Helical; Name=12" evidence="1">
    <location>
        <begin position="545"/>
        <end position="565"/>
    </location>
</feature>
<feature type="topological domain" description="Cytoplasmic" evidence="1">
    <location>
        <begin position="566"/>
        <end position="615"/>
    </location>
</feature>
<feature type="region of interest" description="Disordered" evidence="3">
    <location>
        <begin position="1"/>
        <end position="39"/>
    </location>
</feature>
<feature type="compositionally biased region" description="Polar residues" evidence="3">
    <location>
        <begin position="15"/>
        <end position="24"/>
    </location>
</feature>
<feature type="binding site" evidence="1">
    <location>
        <position position="55"/>
    </location>
    <ligand>
        <name>Na(+)</name>
        <dbReference type="ChEBI" id="CHEBI:29101"/>
        <label>1</label>
    </ligand>
</feature>
<feature type="binding site" evidence="1">
    <location>
        <position position="57"/>
    </location>
    <ligand>
        <name>Na(+)</name>
        <dbReference type="ChEBI" id="CHEBI:29101"/>
        <label>2</label>
    </ligand>
</feature>
<feature type="binding site" evidence="1">
    <location>
        <position position="58"/>
    </location>
    <ligand>
        <name>Na(+)</name>
        <dbReference type="ChEBI" id="CHEBI:29101"/>
        <label>1</label>
    </ligand>
</feature>
<feature type="binding site" evidence="1">
    <location>
        <position position="62"/>
    </location>
    <ligand>
        <name>Na(+)</name>
        <dbReference type="ChEBI" id="CHEBI:29101"/>
        <label>2</label>
    </ligand>
</feature>
<feature type="binding site" evidence="1">
    <location>
        <position position="314"/>
    </location>
    <ligand>
        <name>Na(+)</name>
        <dbReference type="ChEBI" id="CHEBI:29101"/>
        <label>2</label>
    </ligand>
</feature>
<feature type="binding site" evidence="1">
    <location>
        <position position="346"/>
    </location>
    <ligand>
        <name>Na(+)</name>
        <dbReference type="ChEBI" id="CHEBI:29101"/>
        <label>2</label>
    </ligand>
</feature>
<feature type="binding site" evidence="1">
    <location>
        <position position="411"/>
    </location>
    <ligand>
        <name>Na(+)</name>
        <dbReference type="ChEBI" id="CHEBI:29101"/>
        <label>1</label>
    </ligand>
</feature>
<feature type="binding site" evidence="1">
    <location>
        <position position="414"/>
    </location>
    <ligand>
        <name>Na(+)</name>
        <dbReference type="ChEBI" id="CHEBI:29101"/>
        <label>1</label>
    </ligand>
</feature>
<feature type="binding site" evidence="1">
    <location>
        <position position="415"/>
    </location>
    <ligand>
        <name>Na(+)</name>
        <dbReference type="ChEBI" id="CHEBI:29101"/>
        <label>1</label>
    </ligand>
</feature>
<feature type="glycosylation site" description="N-linked (GlcNAc...) asparagine" evidence="2">
    <location>
        <position position="162"/>
    </location>
</feature>
<feature type="glycosylation site" description="N-linked (GlcNAc...) asparagine" evidence="2">
    <location>
        <position position="187"/>
    </location>
</feature>
<feature type="disulfide bond" evidence="1">
    <location>
        <begin position="161"/>
        <end position="170"/>
    </location>
</feature>
<gene>
    <name evidence="9" type="primary">dat-1</name>
    <name evidence="9" type="ORF">T23G5.5</name>
</gene>
<dbReference type="EMBL" id="AF079899">
    <property type="protein sequence ID" value="AAC83661.1"/>
    <property type="molecule type" value="mRNA"/>
</dbReference>
<dbReference type="EMBL" id="BX284603">
    <property type="protein sequence ID" value="CAA79575.2"/>
    <property type="molecule type" value="Genomic_DNA"/>
</dbReference>
<dbReference type="EMBL" id="Z19156">
    <property type="protein sequence ID" value="CAA79575.2"/>
    <property type="status" value="JOINED"/>
    <property type="molecule type" value="Genomic_DNA"/>
</dbReference>
<dbReference type="PIR" id="D88551">
    <property type="entry name" value="D88551"/>
</dbReference>
<dbReference type="PIR" id="S28306">
    <property type="entry name" value="S28306"/>
</dbReference>
<dbReference type="PIR" id="T43330">
    <property type="entry name" value="T43330"/>
</dbReference>
<dbReference type="RefSeq" id="NP_499043.1">
    <property type="nucleotide sequence ID" value="NM_066642.7"/>
</dbReference>
<dbReference type="SMR" id="Q03614"/>
<dbReference type="BioGRID" id="41503">
    <property type="interactions" value="1"/>
</dbReference>
<dbReference type="DIP" id="DIP-46293N"/>
<dbReference type="FunCoup" id="Q03614">
    <property type="interactions" value="78"/>
</dbReference>
<dbReference type="IntAct" id="Q03614">
    <property type="interactions" value="1"/>
</dbReference>
<dbReference type="STRING" id="6239.T23G5.5.1"/>
<dbReference type="TCDB" id="2.A.22.1.4">
    <property type="family name" value="the neurotransmitter:sodium symporter (nss) family"/>
</dbReference>
<dbReference type="GlyCosmos" id="Q03614">
    <property type="glycosylation" value="2 sites, No reported glycans"/>
</dbReference>
<dbReference type="PaxDb" id="6239-T23G5.5"/>
<dbReference type="EnsemblMetazoa" id="T23G5.5.1">
    <property type="protein sequence ID" value="T23G5.5.1"/>
    <property type="gene ID" value="WBGene00000934"/>
</dbReference>
<dbReference type="GeneID" id="176304"/>
<dbReference type="KEGG" id="cel:CELE_T23G5.5"/>
<dbReference type="UCSC" id="T23G5.5">
    <property type="organism name" value="c. elegans"/>
</dbReference>
<dbReference type="AGR" id="WB:WBGene00000934"/>
<dbReference type="CTD" id="176304"/>
<dbReference type="WormBase" id="T23G5.5">
    <property type="protein sequence ID" value="CE25124"/>
    <property type="gene ID" value="WBGene00000934"/>
    <property type="gene designation" value="dat-1"/>
</dbReference>
<dbReference type="eggNOG" id="KOG3659">
    <property type="taxonomic scope" value="Eukaryota"/>
</dbReference>
<dbReference type="GeneTree" id="ENSGT00940000173306"/>
<dbReference type="HOGENOM" id="CLU_006855_9_0_1"/>
<dbReference type="InParanoid" id="Q03614"/>
<dbReference type="OMA" id="WAIMGHF"/>
<dbReference type="OrthoDB" id="6581954at2759"/>
<dbReference type="PhylomeDB" id="Q03614"/>
<dbReference type="Reactome" id="R-CEL-379401">
    <property type="pathway name" value="Dopamine clearance from the synaptic cleft"/>
</dbReference>
<dbReference type="Reactome" id="R-CEL-442660">
    <property type="pathway name" value="Na+/Cl- dependent neurotransmitter transporters"/>
</dbReference>
<dbReference type="PRO" id="PR:Q03614"/>
<dbReference type="Proteomes" id="UP000001940">
    <property type="component" value="Chromosome III"/>
</dbReference>
<dbReference type="Bgee" id="WBGene00000934">
    <property type="expression patterns" value="Expressed in larva and 3 other cell types or tissues"/>
</dbReference>
<dbReference type="GO" id="GO:0030673">
    <property type="term" value="C:axolemma"/>
    <property type="evidence" value="ECO:0000314"/>
    <property type="project" value="WormBase"/>
</dbReference>
<dbReference type="GO" id="GO:0030424">
    <property type="term" value="C:axon"/>
    <property type="evidence" value="ECO:0000318"/>
    <property type="project" value="GO_Central"/>
</dbReference>
<dbReference type="GO" id="GO:0032590">
    <property type="term" value="C:dendrite membrane"/>
    <property type="evidence" value="ECO:0000314"/>
    <property type="project" value="UniProtKB"/>
</dbReference>
<dbReference type="GO" id="GO:0032809">
    <property type="term" value="C:neuronal cell body membrane"/>
    <property type="evidence" value="ECO:0000314"/>
    <property type="project" value="UniProtKB"/>
</dbReference>
<dbReference type="GO" id="GO:0005886">
    <property type="term" value="C:plasma membrane"/>
    <property type="evidence" value="ECO:0000318"/>
    <property type="project" value="GO_Central"/>
</dbReference>
<dbReference type="GO" id="GO:0042734">
    <property type="term" value="C:presynaptic membrane"/>
    <property type="evidence" value="ECO:0000314"/>
    <property type="project" value="WormBase"/>
</dbReference>
<dbReference type="GO" id="GO:0097060">
    <property type="term" value="C:synaptic membrane"/>
    <property type="evidence" value="ECO:0000314"/>
    <property type="project" value="UniProtKB"/>
</dbReference>
<dbReference type="GO" id="GO:0005275">
    <property type="term" value="F:amine transmembrane transporter activity"/>
    <property type="evidence" value="ECO:0000315"/>
    <property type="project" value="WormBase"/>
</dbReference>
<dbReference type="GO" id="GO:0005254">
    <property type="term" value="F:chloride channel activity"/>
    <property type="evidence" value="ECO:0000314"/>
    <property type="project" value="WormBase"/>
</dbReference>
<dbReference type="GO" id="GO:0005330">
    <property type="term" value="F:dopamine:sodium symporter activity"/>
    <property type="evidence" value="ECO:0000314"/>
    <property type="project" value="WormBase"/>
</dbReference>
<dbReference type="GO" id="GO:0046872">
    <property type="term" value="F:metal ion binding"/>
    <property type="evidence" value="ECO:0007669"/>
    <property type="project" value="UniProtKB-KW"/>
</dbReference>
<dbReference type="GO" id="GO:0015837">
    <property type="term" value="P:amine transport"/>
    <property type="evidence" value="ECO:0000315"/>
    <property type="project" value="WormBase"/>
</dbReference>
<dbReference type="GO" id="GO:0006865">
    <property type="term" value="P:amino acid transport"/>
    <property type="evidence" value="ECO:0000318"/>
    <property type="project" value="GO_Central"/>
</dbReference>
<dbReference type="GO" id="GO:0071419">
    <property type="term" value="P:cellular response to amphetamine"/>
    <property type="evidence" value="ECO:0000315"/>
    <property type="project" value="UniProtKB"/>
</dbReference>
<dbReference type="GO" id="GO:0006821">
    <property type="term" value="P:chloride transport"/>
    <property type="evidence" value="ECO:0000314"/>
    <property type="project" value="WormBase"/>
</dbReference>
<dbReference type="GO" id="GO:0090494">
    <property type="term" value="P:dopamine uptake"/>
    <property type="evidence" value="ECO:0000314"/>
    <property type="project" value="WormBase"/>
</dbReference>
<dbReference type="GO" id="GO:0051583">
    <property type="term" value="P:dopamine uptake involved in synaptic transmission"/>
    <property type="evidence" value="ECO:0000314"/>
    <property type="project" value="WormBase"/>
</dbReference>
<dbReference type="GO" id="GO:1905803">
    <property type="term" value="P:negative regulation of cellular response to manganese ion"/>
    <property type="evidence" value="ECO:0000316"/>
    <property type="project" value="UniProtKB"/>
</dbReference>
<dbReference type="GO" id="GO:1905847">
    <property type="term" value="P:negative regulation of cellular response to oxidopamine"/>
    <property type="evidence" value="ECO:0000315"/>
    <property type="project" value="UniProtKB"/>
</dbReference>
<dbReference type="GO" id="GO:0090327">
    <property type="term" value="P:negative regulation of locomotion involved in locomotory behavior"/>
    <property type="evidence" value="ECO:0000315"/>
    <property type="project" value="UniProtKB"/>
</dbReference>
<dbReference type="GO" id="GO:0015874">
    <property type="term" value="P:norepinephrine transport"/>
    <property type="evidence" value="ECO:0000318"/>
    <property type="project" value="GO_Central"/>
</dbReference>
<dbReference type="GO" id="GO:0090326">
    <property type="term" value="P:positive regulation of locomotion involved in locomotory behavior"/>
    <property type="evidence" value="ECO:0000315"/>
    <property type="project" value="UniProtKB"/>
</dbReference>
<dbReference type="GO" id="GO:0035725">
    <property type="term" value="P:sodium ion transmembrane transport"/>
    <property type="evidence" value="ECO:0000318"/>
    <property type="project" value="GO_Central"/>
</dbReference>
<dbReference type="CDD" id="cd11556">
    <property type="entry name" value="SLC6sbd_SERT-like_u1"/>
    <property type="match status" value="1"/>
</dbReference>
<dbReference type="InterPro" id="IPR000175">
    <property type="entry name" value="Na/ntran_symport"/>
</dbReference>
<dbReference type="InterPro" id="IPR037272">
    <property type="entry name" value="SNS_sf"/>
</dbReference>
<dbReference type="PANTHER" id="PTHR11616:SF320">
    <property type="entry name" value="SODIUM-DEPENDENT NORADRENALINE TRANSPORTER"/>
    <property type="match status" value="1"/>
</dbReference>
<dbReference type="PANTHER" id="PTHR11616">
    <property type="entry name" value="SODIUM/CHLORIDE DEPENDENT TRANSPORTER"/>
    <property type="match status" value="1"/>
</dbReference>
<dbReference type="Pfam" id="PF00209">
    <property type="entry name" value="SNF"/>
    <property type="match status" value="1"/>
</dbReference>
<dbReference type="PRINTS" id="PR00176">
    <property type="entry name" value="NANEUSMPORT"/>
</dbReference>
<dbReference type="SUPFAM" id="SSF161070">
    <property type="entry name" value="SNF-like"/>
    <property type="match status" value="1"/>
</dbReference>
<dbReference type="PROSITE" id="PS00610">
    <property type="entry name" value="NA_NEUROTRAN_SYMP_1"/>
    <property type="match status" value="1"/>
</dbReference>
<dbReference type="PROSITE" id="PS00754">
    <property type="entry name" value="NA_NEUROTRAN_SYMP_2"/>
    <property type="match status" value="1"/>
</dbReference>
<dbReference type="PROSITE" id="PS50267">
    <property type="entry name" value="NA_NEUROTRAN_SYMP_3"/>
    <property type="match status" value="1"/>
</dbReference>
<proteinExistence type="evidence at transcript level"/>
<keyword id="KW-1003">Cell membrane</keyword>
<keyword id="KW-1015">Disulfide bond</keyword>
<keyword id="KW-0325">Glycoprotein</keyword>
<keyword id="KW-0472">Membrane</keyword>
<keyword id="KW-0479">Metal-binding</keyword>
<keyword id="KW-0532">Neurotransmitter transport</keyword>
<keyword id="KW-1185">Reference proteome</keyword>
<keyword id="KW-0915">Sodium</keyword>
<keyword id="KW-0769">Symport</keyword>
<keyword id="KW-0812">Transmembrane</keyword>
<keyword id="KW-1133">Transmembrane helix</keyword>
<keyword id="KW-0813">Transport</keyword>
<organism>
    <name type="scientific">Caenorhabditis elegans</name>
    <dbReference type="NCBI Taxonomy" id="6239"/>
    <lineage>
        <taxon>Eukaryota</taxon>
        <taxon>Metazoa</taxon>
        <taxon>Ecdysozoa</taxon>
        <taxon>Nematoda</taxon>
        <taxon>Chromadorea</taxon>
        <taxon>Rhabditida</taxon>
        <taxon>Rhabditina</taxon>
        <taxon>Rhabditomorpha</taxon>
        <taxon>Rhabditoidea</taxon>
        <taxon>Rhabditidae</taxon>
        <taxon>Peloderinae</taxon>
        <taxon>Caenorhabditis</taxon>
    </lineage>
</organism>
<reference key="1">
    <citation type="journal article" date="1998" name="Mol. Pharmacol.">
        <title>The Caenorhabditis elegans gene T23G5.5 encodes an antidepressant- and cocaine-sensitive dopamine transporter.</title>
        <authorList>
            <person name="Jayanthi L.D."/>
            <person name="Apparsundaram S."/>
            <person name="Malone M.D."/>
            <person name="Ward E."/>
            <person name="Miller D.M."/>
            <person name="Eppler M."/>
            <person name="Blakely R.D."/>
        </authorList>
    </citation>
    <scope>NUCLEOTIDE SEQUENCE [MRNA]</scope>
    <scope>FUNCTION</scope>
    <scope>SUBCELLULAR LOCATION</scope>
</reference>
<reference key="2">
    <citation type="journal article" date="1994" name="Nature">
        <title>2.2 Mb of contiguous nucleotide sequence from chromosome III of C. elegans.</title>
        <authorList>
            <person name="Wilson R."/>
            <person name="Ainscough R."/>
            <person name="Anderson K."/>
            <person name="Baynes C."/>
            <person name="Berks M."/>
            <person name="Bonfield J."/>
            <person name="Burton J."/>
            <person name="Connell M."/>
            <person name="Copsey T."/>
            <person name="Cooper J."/>
            <person name="Coulson A."/>
            <person name="Craxton M."/>
            <person name="Dear S."/>
            <person name="Du Z."/>
            <person name="Durbin R."/>
            <person name="Favello A."/>
            <person name="Fraser A."/>
            <person name="Fulton L."/>
            <person name="Gardner A."/>
            <person name="Green P."/>
            <person name="Hawkins T."/>
            <person name="Hillier L."/>
            <person name="Jier M."/>
            <person name="Johnston L."/>
            <person name="Jones M."/>
            <person name="Kershaw J."/>
            <person name="Kirsten J."/>
            <person name="Laisster N."/>
            <person name="Latreille P."/>
            <person name="Lightning J."/>
            <person name="Lloyd C."/>
            <person name="Mortimore B."/>
            <person name="O'Callaghan M."/>
            <person name="Parsons J."/>
            <person name="Percy C."/>
            <person name="Rifken L."/>
            <person name="Roopra A."/>
            <person name="Saunders D."/>
            <person name="Shownkeen R."/>
            <person name="Sims M."/>
            <person name="Smaldon N."/>
            <person name="Smith A."/>
            <person name="Smith M."/>
            <person name="Sonnhammer E."/>
            <person name="Staden R."/>
            <person name="Sulston J."/>
            <person name="Thierry-Mieg J."/>
            <person name="Thomas K."/>
            <person name="Vaudin M."/>
            <person name="Vaughan K."/>
            <person name="Waterston R."/>
            <person name="Watson A."/>
            <person name="Weinstock L."/>
            <person name="Wilkinson-Sproat J."/>
            <person name="Wohldman P."/>
        </authorList>
    </citation>
    <scope>NUCLEOTIDE SEQUENCE [LARGE SCALE GENOMIC DNA]</scope>
    <source>
        <strain>Bristol N2</strain>
    </source>
</reference>
<reference key="3">
    <citation type="journal article" date="1998" name="Science">
        <title>Genome sequence of the nematode C. elegans: a platform for investigating biology.</title>
        <authorList>
            <consortium name="The C. elegans sequencing consortium"/>
        </authorList>
    </citation>
    <scope>NUCLEOTIDE SEQUENCE [LARGE SCALE GENOMIC DNA]</scope>
    <source>
        <strain>Bristol N2</strain>
    </source>
</reference>
<reference key="4">
    <citation type="journal article" date="2010" name="Mol. Pharmacol.">
        <title>Molecular mechanisms of amphetamine actions in Caenorhabditis elegans.</title>
        <authorList>
            <person name="Carvelli L."/>
            <person name="Matthies D.S."/>
            <person name="Galli A."/>
        </authorList>
    </citation>
    <scope>ROLE IN SWIMMING-INDUCED PARALYSIS</scope>
</reference>
<reference key="5">
    <citation type="journal article" date="2018" name="PLoS Genet.">
        <title>6-OHDA-induced dopaminergic neurodegeneration in Caenorhabditis elegans is promoted by the engulfment pathway and inhibited by the transthyretin-related protein TTR-33.</title>
        <authorList>
            <person name="Offenburger S.L."/>
            <person name="Ho X.Y."/>
            <person name="Tachie-Menson T."/>
            <person name="Coakley S."/>
            <person name="Hilliard M.A."/>
            <person name="Gartner A."/>
        </authorList>
    </citation>
    <scope>FUNCTION</scope>
</reference>
<reference evidence="8" key="6">
    <citation type="journal article" date="2022" name="Neurosci. Res.">
        <title>A role for dopamine in C. elegans avoidance behavior induced by mitochondrial stress.</title>
        <authorList>
            <person name="Chou S.H."/>
            <person name="Chen Y.J."/>
            <person name="Liao C.P."/>
            <person name="Pan C.L."/>
        </authorList>
    </citation>
    <scope>FUNCTION</scope>
    <scope>DISRUPTION PHENOTYPE</scope>
</reference>
<sequence length="615" mass="69266">MQLVPTDDPDEKIGRTSNGMQNATLPIDGPVNTEPKDPAREQWSGKLDFLLSVVGFAVDLGNIWRFPYLCFKNGGGVFLIPYSIMVLLTGVPLFYMELCLGQYYRKGAITTWGRICPLFKGIGYCVILTAFYVDFFYNVILAWGLHYLYTSFSFNLPWASCNNSYNSPACYEPHWSEDGTAMCRSANQSVSAEKISAAEEYFYKGFLGLHEANAPNSHVIRSVTDLGNVRWDIALSLFVVYLICYFSMWKGIHTSGKVVWFTALFPYVVLGILFIRGVTLPGWQNGIEYYLRPNFEMLKRPSVWQDAATQVFFSLGPGFGVLMAYSSYNDFHNNVYVDALFTSFINCATSFLSGFVIFSVLGYMSCKSGKPIEAVAQEGPGLVFVVYPEALSTMPYAPFWSVLFFLMLMTLGLDSSFGGSEAIITGLSDEFPILKKNREVFVGCLFAFYMVIGIAMCTEGGILIMEWLIIYGTTWGLLIAVFCEAMVIAYIYGLRQFVHDVKEMMGFRPGNYWKFCWSCAAPFILLSMITSNFINYQALTYQDYTYPTAANVIGIIFALSGASFIPLVGIYKFVNARGNTISEKWQRVTMPYRKRPNQTEYIPIPTTQPHSDIML</sequence>
<accession>Q03614</accession>
<accession>Q9XTK0</accession>
<name>NTDO_CAEEL</name>